<accession>Q9TV42</accession>
<protein>
    <recommendedName>
        <fullName>C-C chemokine receptor type 5</fullName>
        <shortName>C-C CKR-5</shortName>
        <shortName>CC-CKR-5</shortName>
        <shortName>CCR-5</shortName>
        <shortName>CCR5</shortName>
    </recommendedName>
    <cdAntigenName>CD195</cdAntigenName>
</protein>
<reference key="1">
    <citation type="journal article" date="1999" name="AIDS Res. Hum. Retroviruses">
        <title>Mutations in CCR5-coding sequences are not associated with SIV carrier status in African nonhuman primates.</title>
        <authorList>
            <person name="Mueller-Trutwin M.-C."/>
            <person name="Corbet S."/>
            <person name="Hansen J."/>
            <person name="Georges-Courbot M.-C."/>
            <person name="Diop O."/>
            <person name="Rigoulet J."/>
            <person name="Barre-Sinoussi F."/>
            <person name="Fomsgaard A."/>
        </authorList>
    </citation>
    <scope>NUCLEOTIDE SEQUENCE [GENOMIC DNA]</scope>
    <source>
        <strain>100</strain>
    </source>
</reference>
<organism>
    <name type="scientific">Chlorocebus pygerythrus</name>
    <name type="common">Vervet monkey</name>
    <name type="synonym">Cercopithecus pygerythrus</name>
    <dbReference type="NCBI Taxonomy" id="60710"/>
    <lineage>
        <taxon>Eukaryota</taxon>
        <taxon>Metazoa</taxon>
        <taxon>Chordata</taxon>
        <taxon>Craniata</taxon>
        <taxon>Vertebrata</taxon>
        <taxon>Euteleostomi</taxon>
        <taxon>Mammalia</taxon>
        <taxon>Eutheria</taxon>
        <taxon>Euarchontoglires</taxon>
        <taxon>Primates</taxon>
        <taxon>Haplorrhini</taxon>
        <taxon>Catarrhini</taxon>
        <taxon>Cercopithecidae</taxon>
        <taxon>Cercopithecinae</taxon>
        <taxon>Chlorocebus</taxon>
    </lineage>
</organism>
<sequence>MDYQVSSPTYDIDYYTSEPCQKINVKQIAARLLPPLYSLVFIFGFVGNILVVLILINCKRLKSMTDIYLLNLAISDLLFLLTVPFWAHYAAAQWDFGNTMCQLLTGLYFIGFFSGIFFIILLTIDRYLAIVHAVFALKARTVTFGVVTSVITWVVAVFASLPRIIFTRSQREGLHYACSSHFPYSQYQFWKNFQTLKIVILGLVLPLLVMVICYSGILKTLLRCRNEKKRHRAVRLIFTIMIVYFLFWAPYNIVLLLNTFQEFFGLNNCSSSNRLDQAMQVTETLGMTHCCINPIIYAFVGEKFRNYLLVFFQKHIAKRFCKCCSIFQQEAPERASSVYTRSTGEQEISVGL</sequence>
<proteinExistence type="inferred from homology"/>
<feature type="chain" id="PRO_0000069252" description="C-C chemokine receptor type 5">
    <location>
        <begin position="1"/>
        <end position="352"/>
    </location>
</feature>
<feature type="topological domain" description="Extracellular" evidence="3">
    <location>
        <begin position="1"/>
        <end position="30"/>
    </location>
</feature>
<feature type="transmembrane region" description="Helical; Name=1" evidence="3">
    <location>
        <begin position="31"/>
        <end position="58"/>
    </location>
</feature>
<feature type="topological domain" description="Cytoplasmic" evidence="3">
    <location>
        <begin position="59"/>
        <end position="68"/>
    </location>
</feature>
<feature type="transmembrane region" description="Helical; Name=2" evidence="3">
    <location>
        <begin position="69"/>
        <end position="89"/>
    </location>
</feature>
<feature type="topological domain" description="Extracellular" evidence="3">
    <location>
        <begin position="90"/>
        <end position="102"/>
    </location>
</feature>
<feature type="transmembrane region" description="Helical; Name=3" evidence="3">
    <location>
        <begin position="103"/>
        <end position="124"/>
    </location>
</feature>
<feature type="topological domain" description="Cytoplasmic" evidence="3">
    <location>
        <begin position="125"/>
        <end position="141"/>
    </location>
</feature>
<feature type="transmembrane region" description="Helical; Name=4" evidence="3">
    <location>
        <begin position="142"/>
        <end position="166"/>
    </location>
</feature>
<feature type="topological domain" description="Extracellular" evidence="3">
    <location>
        <begin position="167"/>
        <end position="198"/>
    </location>
</feature>
<feature type="transmembrane region" description="Helical; Name=5" evidence="3">
    <location>
        <begin position="199"/>
        <end position="218"/>
    </location>
</feature>
<feature type="topological domain" description="Cytoplasmic" evidence="3">
    <location>
        <begin position="219"/>
        <end position="235"/>
    </location>
</feature>
<feature type="transmembrane region" description="Helical; Name=6" evidence="3">
    <location>
        <begin position="236"/>
        <end position="260"/>
    </location>
</feature>
<feature type="topological domain" description="Extracellular" evidence="3">
    <location>
        <begin position="261"/>
        <end position="277"/>
    </location>
</feature>
<feature type="transmembrane region" description="Helical; Name=7" evidence="3">
    <location>
        <begin position="278"/>
        <end position="301"/>
    </location>
</feature>
<feature type="topological domain" description="Cytoplasmic" evidence="3">
    <location>
        <begin position="302"/>
        <end position="352"/>
    </location>
</feature>
<feature type="modified residue" description="Sulfotyrosine" evidence="1">
    <location>
        <position position="3"/>
    </location>
</feature>
<feature type="modified residue" description="Sulfotyrosine" evidence="3">
    <location>
        <position position="10"/>
    </location>
</feature>
<feature type="modified residue" description="Sulfotyrosine" evidence="3">
    <location>
        <position position="14"/>
    </location>
</feature>
<feature type="modified residue" description="Sulfotyrosine" evidence="3">
    <location>
        <position position="15"/>
    </location>
</feature>
<feature type="modified residue" description="Phosphoserine; by BARK1" evidence="1">
    <location>
        <position position="336"/>
    </location>
</feature>
<feature type="modified residue" description="Phosphoserine; by BARK1" evidence="1">
    <location>
        <position position="337"/>
    </location>
</feature>
<feature type="modified residue" description="Phosphoserine; by BARK1" evidence="1">
    <location>
        <position position="342"/>
    </location>
</feature>
<feature type="modified residue" description="Phosphoserine; by BARK1" evidence="1">
    <location>
        <position position="349"/>
    </location>
</feature>
<feature type="lipid moiety-binding region" description="S-palmitoyl cysteine" evidence="1">
    <location>
        <position position="321"/>
    </location>
</feature>
<feature type="lipid moiety-binding region" description="S-palmitoyl cysteine" evidence="1">
    <location>
        <position position="323"/>
    </location>
</feature>
<feature type="lipid moiety-binding region" description="S-palmitoyl cysteine" evidence="1">
    <location>
        <position position="324"/>
    </location>
</feature>
<feature type="glycosylation site" description="O-linked (GalNAc...) serine" evidence="1">
    <location>
        <position position="6"/>
    </location>
</feature>
<feature type="glycosylation site" description="O-linked (GalNAc...) serine" evidence="1">
    <location>
        <position position="7"/>
    </location>
</feature>
<feature type="disulfide bond" evidence="1">
    <location>
        <begin position="20"/>
        <end position="269"/>
    </location>
</feature>
<feature type="disulfide bond" evidence="4">
    <location>
        <begin position="101"/>
        <end position="178"/>
    </location>
</feature>
<comment type="function">
    <text evidence="1">Receptor for a number of inflammatory CC-chemokines including CCL3/MIP-1-alpha, CCL4/MIP-1-beta and RANTES and subsequently transduces a signal by increasing the intracellular calcium ion level. May play a role in the control of granulocytic lineage proliferation or differentiation. Participates in T-lymphocyte migration to the infection site by acting as a chemotactic receptor.</text>
</comment>
<comment type="subunit">
    <text evidence="1">Interacts with PRAF2. Efficient ligand binding to CCL3/MIP-1alpha and CCL4/MIP-1beta requires sulfation, O-glycosylation and sialic acid modifications. Glycosylation on Ser-6 is required for efficient binding of CCL4. Interacts with GRK2. Interacts with ARRB1 and ARRB2. Interacts with CNIH4. Interacts with S100A4; this interaction stimulates T-lymphocyte chemotaxis.</text>
</comment>
<comment type="subcellular location">
    <subcellularLocation>
        <location evidence="2">Cell membrane</location>
        <topology evidence="2">Multi-pass membrane protein</topology>
    </subcellularLocation>
</comment>
<comment type="PTM">
    <text evidence="1">Sulfated on at least 2 of the N-terminal tyrosines. Sulfation is required for efficient binding of the chemokines, CCL3 and CCL4 (By similarity).</text>
</comment>
<comment type="PTM">
    <text evidence="1">Palmitoylation in the C-terminal is important for cell surface expression.</text>
</comment>
<comment type="PTM">
    <text evidence="1">Phosphorylation on serine residues in the C-terminal is stimulated by binding CC chemokines especially by APO-RANTES.</text>
</comment>
<comment type="PTM">
    <text evidence="1">O-glycosylated, but not N-glycosylated. Ser-6 appears to be the major site even if Ser-7 may be also O-glycosylated. Also sialylated glycans present which contribute to chemokine binding. Thr-16 and Ser-17 may also be glycosylated and, if so, with small moieties such as a T-antigen.</text>
</comment>
<comment type="similarity">
    <text evidence="4">Belongs to the G-protein coupled receptor 1 family.</text>
</comment>
<gene>
    <name type="primary">CCR5</name>
    <name type="synonym">CMKBR5</name>
</gene>
<dbReference type="EMBL" id="AF035222">
    <property type="protein sequence ID" value="AAD44015.1"/>
    <property type="molecule type" value="Genomic_DNA"/>
</dbReference>
<dbReference type="SMR" id="Q9TV42"/>
<dbReference type="GlyCosmos" id="Q9TV42">
    <property type="glycosylation" value="2 sites, No reported glycans"/>
</dbReference>
<dbReference type="GO" id="GO:0005737">
    <property type="term" value="C:cytoplasm"/>
    <property type="evidence" value="ECO:0007669"/>
    <property type="project" value="TreeGrafter"/>
</dbReference>
<dbReference type="GO" id="GO:0009897">
    <property type="term" value="C:external side of plasma membrane"/>
    <property type="evidence" value="ECO:0000250"/>
    <property type="project" value="UniProtKB"/>
</dbReference>
<dbReference type="GO" id="GO:0016493">
    <property type="term" value="F:C-C chemokine receptor activity"/>
    <property type="evidence" value="ECO:0000250"/>
    <property type="project" value="UniProtKB"/>
</dbReference>
<dbReference type="GO" id="GO:0071791">
    <property type="term" value="F:chemokine (C-C motif) ligand 5 binding"/>
    <property type="evidence" value="ECO:0007669"/>
    <property type="project" value="TreeGrafter"/>
</dbReference>
<dbReference type="GO" id="GO:0019722">
    <property type="term" value="P:calcium-mediated signaling"/>
    <property type="evidence" value="ECO:0007669"/>
    <property type="project" value="TreeGrafter"/>
</dbReference>
<dbReference type="GO" id="GO:0060326">
    <property type="term" value="P:cell chemotaxis"/>
    <property type="evidence" value="ECO:0007669"/>
    <property type="project" value="TreeGrafter"/>
</dbReference>
<dbReference type="GO" id="GO:0006955">
    <property type="term" value="P:immune response"/>
    <property type="evidence" value="ECO:0007669"/>
    <property type="project" value="InterPro"/>
</dbReference>
<dbReference type="GO" id="GO:0006954">
    <property type="term" value="P:inflammatory response"/>
    <property type="evidence" value="ECO:0007669"/>
    <property type="project" value="InterPro"/>
</dbReference>
<dbReference type="GO" id="GO:0007204">
    <property type="term" value="P:positive regulation of cytosolic calcium ion concentration"/>
    <property type="evidence" value="ECO:0007669"/>
    <property type="project" value="TreeGrafter"/>
</dbReference>
<dbReference type="CDD" id="cd15184">
    <property type="entry name" value="7tmA_CCR5_CCR2"/>
    <property type="match status" value="1"/>
</dbReference>
<dbReference type="FunFam" id="1.20.1070.10:FF:000026">
    <property type="entry name" value="C-C chemokine receptor type 5"/>
    <property type="match status" value="1"/>
</dbReference>
<dbReference type="Gene3D" id="1.20.1070.10">
    <property type="entry name" value="Rhodopsin 7-helix transmembrane proteins"/>
    <property type="match status" value="1"/>
</dbReference>
<dbReference type="InterPro" id="IPR050119">
    <property type="entry name" value="CCR1-9-like"/>
</dbReference>
<dbReference type="InterPro" id="IPR002240">
    <property type="entry name" value="Chemokine_CCR5"/>
</dbReference>
<dbReference type="InterPro" id="IPR000355">
    <property type="entry name" value="Chemokine_rcpt"/>
</dbReference>
<dbReference type="InterPro" id="IPR000276">
    <property type="entry name" value="GPCR_Rhodpsn"/>
</dbReference>
<dbReference type="InterPro" id="IPR017452">
    <property type="entry name" value="GPCR_Rhodpsn_7TM"/>
</dbReference>
<dbReference type="PANTHER" id="PTHR10489:SF686">
    <property type="entry name" value="C-C CHEMOKINE RECEPTOR TYPE 5"/>
    <property type="match status" value="1"/>
</dbReference>
<dbReference type="PANTHER" id="PTHR10489">
    <property type="entry name" value="CELL ADHESION MOLECULE"/>
    <property type="match status" value="1"/>
</dbReference>
<dbReference type="Pfam" id="PF00001">
    <property type="entry name" value="7tm_1"/>
    <property type="match status" value="1"/>
</dbReference>
<dbReference type="PRINTS" id="PR00657">
    <property type="entry name" value="CCCHEMOKINER"/>
</dbReference>
<dbReference type="PRINTS" id="PR01110">
    <property type="entry name" value="CHEMOKINER5"/>
</dbReference>
<dbReference type="PRINTS" id="PR00237">
    <property type="entry name" value="GPCRRHODOPSN"/>
</dbReference>
<dbReference type="SUPFAM" id="SSF81321">
    <property type="entry name" value="Family A G protein-coupled receptor-like"/>
    <property type="match status" value="1"/>
</dbReference>
<dbReference type="PROSITE" id="PS00237">
    <property type="entry name" value="G_PROTEIN_RECEP_F1_1"/>
    <property type="match status" value="1"/>
</dbReference>
<dbReference type="PROSITE" id="PS50262">
    <property type="entry name" value="G_PROTEIN_RECEP_F1_2"/>
    <property type="match status" value="1"/>
</dbReference>
<keyword id="KW-1003">Cell membrane</keyword>
<keyword id="KW-1015">Disulfide bond</keyword>
<keyword id="KW-0297">G-protein coupled receptor</keyword>
<keyword id="KW-0325">Glycoprotein</keyword>
<keyword id="KW-0449">Lipoprotein</keyword>
<keyword id="KW-0472">Membrane</keyword>
<keyword id="KW-0564">Palmitate</keyword>
<keyword id="KW-0597">Phosphoprotein</keyword>
<keyword id="KW-0675">Receptor</keyword>
<keyword id="KW-0765">Sulfation</keyword>
<keyword id="KW-0807">Transducer</keyword>
<keyword id="KW-0812">Transmembrane</keyword>
<keyword id="KW-1133">Transmembrane helix</keyword>
<evidence type="ECO:0000250" key="1">
    <source>
        <dbReference type="UniProtKB" id="P51681"/>
    </source>
</evidence>
<evidence type="ECO:0000250" key="2">
    <source>
        <dbReference type="UniProtKB" id="Q9XT76"/>
    </source>
</evidence>
<evidence type="ECO:0000255" key="3"/>
<evidence type="ECO:0000255" key="4">
    <source>
        <dbReference type="PROSITE-ProRule" id="PRU00521"/>
    </source>
</evidence>
<name>CCR5_CHLPG</name>